<dbReference type="EMBL" id="CP001144">
    <property type="protein sequence ID" value="ACH74008.1"/>
    <property type="molecule type" value="Genomic_DNA"/>
</dbReference>
<dbReference type="RefSeq" id="WP_001294863.1">
    <property type="nucleotide sequence ID" value="NC_011205.1"/>
</dbReference>
<dbReference type="SMR" id="B5FSX9"/>
<dbReference type="KEGG" id="sed:SeD_A3137"/>
<dbReference type="HOGENOM" id="CLU_066607_3_2_6"/>
<dbReference type="Proteomes" id="UP000008322">
    <property type="component" value="Chromosome"/>
</dbReference>
<dbReference type="GO" id="GO:0005737">
    <property type="term" value="C:cytoplasm"/>
    <property type="evidence" value="ECO:0007669"/>
    <property type="project" value="UniProtKB-SubCell"/>
</dbReference>
<dbReference type="GO" id="GO:0006282">
    <property type="term" value="P:regulation of DNA repair"/>
    <property type="evidence" value="ECO:0007669"/>
    <property type="project" value="UniProtKB-UniRule"/>
</dbReference>
<dbReference type="FunFam" id="1.10.10.10:FF:000133">
    <property type="entry name" value="Regulatory protein RecX"/>
    <property type="match status" value="1"/>
</dbReference>
<dbReference type="FunFam" id="1.10.10.10:FF:000134">
    <property type="entry name" value="Regulatory protein RecX"/>
    <property type="match status" value="1"/>
</dbReference>
<dbReference type="Gene3D" id="1.10.10.10">
    <property type="entry name" value="Winged helix-like DNA-binding domain superfamily/Winged helix DNA-binding domain"/>
    <property type="match status" value="3"/>
</dbReference>
<dbReference type="HAMAP" id="MF_01114">
    <property type="entry name" value="RecX"/>
    <property type="match status" value="1"/>
</dbReference>
<dbReference type="InterPro" id="IPR053926">
    <property type="entry name" value="RecX_HTH_1st"/>
</dbReference>
<dbReference type="InterPro" id="IPR053924">
    <property type="entry name" value="RecX_HTH_2nd"/>
</dbReference>
<dbReference type="InterPro" id="IPR053925">
    <property type="entry name" value="RecX_HTH_3rd"/>
</dbReference>
<dbReference type="InterPro" id="IPR003783">
    <property type="entry name" value="Regulatory_RecX"/>
</dbReference>
<dbReference type="InterPro" id="IPR036388">
    <property type="entry name" value="WH-like_DNA-bd_sf"/>
</dbReference>
<dbReference type="NCBIfam" id="NF001052">
    <property type="entry name" value="PRK00117.1-1"/>
    <property type="match status" value="1"/>
</dbReference>
<dbReference type="PANTHER" id="PTHR33602">
    <property type="entry name" value="REGULATORY PROTEIN RECX FAMILY PROTEIN"/>
    <property type="match status" value="1"/>
</dbReference>
<dbReference type="PANTHER" id="PTHR33602:SF1">
    <property type="entry name" value="REGULATORY PROTEIN RECX FAMILY PROTEIN"/>
    <property type="match status" value="1"/>
</dbReference>
<dbReference type="Pfam" id="PF21982">
    <property type="entry name" value="RecX_HTH1"/>
    <property type="match status" value="1"/>
</dbReference>
<dbReference type="Pfam" id="PF02631">
    <property type="entry name" value="RecX_HTH2"/>
    <property type="match status" value="1"/>
</dbReference>
<dbReference type="Pfam" id="PF21981">
    <property type="entry name" value="RecX_HTH3"/>
    <property type="match status" value="1"/>
</dbReference>
<gene>
    <name evidence="1" type="primary">recX</name>
    <name type="ordered locus">SeD_A3137</name>
</gene>
<comment type="function">
    <text evidence="1">Modulates RecA activity.</text>
</comment>
<comment type="subcellular location">
    <subcellularLocation>
        <location evidence="1">Cytoplasm</location>
    </subcellularLocation>
</comment>
<comment type="similarity">
    <text evidence="1">Belongs to the RecX family.</text>
</comment>
<accession>B5FSX9</accession>
<sequence>MSEPTSRRPAYARLLDRAVRILAVRDHSEQELRRKLSAPVMGKNGPEEIDATADDYERVIAWCHEHHYLDDERFVMRFIASRSRKGYGPARIRQELNQKGISRESTEKAMRECEIDWSEMAREQAVRKYGEPLPSNFSEKVKVQRFLLYRGYLMDDIQQIWRNFAD</sequence>
<evidence type="ECO:0000255" key="1">
    <source>
        <dbReference type="HAMAP-Rule" id="MF_01114"/>
    </source>
</evidence>
<reference key="1">
    <citation type="journal article" date="2011" name="J. Bacteriol.">
        <title>Comparative genomics of 28 Salmonella enterica isolates: evidence for CRISPR-mediated adaptive sublineage evolution.</title>
        <authorList>
            <person name="Fricke W.F."/>
            <person name="Mammel M.K."/>
            <person name="McDermott P.F."/>
            <person name="Tartera C."/>
            <person name="White D.G."/>
            <person name="Leclerc J.E."/>
            <person name="Ravel J."/>
            <person name="Cebula T.A."/>
        </authorList>
    </citation>
    <scope>NUCLEOTIDE SEQUENCE [LARGE SCALE GENOMIC DNA]</scope>
    <source>
        <strain>CT_02021853</strain>
    </source>
</reference>
<organism>
    <name type="scientific">Salmonella dublin (strain CT_02021853)</name>
    <dbReference type="NCBI Taxonomy" id="439851"/>
    <lineage>
        <taxon>Bacteria</taxon>
        <taxon>Pseudomonadati</taxon>
        <taxon>Pseudomonadota</taxon>
        <taxon>Gammaproteobacteria</taxon>
        <taxon>Enterobacterales</taxon>
        <taxon>Enterobacteriaceae</taxon>
        <taxon>Salmonella</taxon>
    </lineage>
</organism>
<feature type="chain" id="PRO_1000137187" description="Regulatory protein RecX">
    <location>
        <begin position="1"/>
        <end position="166"/>
    </location>
</feature>
<name>RECX_SALDC</name>
<protein>
    <recommendedName>
        <fullName evidence="1">Regulatory protein RecX</fullName>
    </recommendedName>
</protein>
<keyword id="KW-0963">Cytoplasm</keyword>
<proteinExistence type="inferred from homology"/>